<accession>Q08BW6</accession>
<reference key="1">
    <citation type="submission" date="2006-09" db="EMBL/GenBank/DDBJ databases">
        <authorList>
            <consortium name="NIH - Zebrafish Gene Collection (ZGC) project"/>
        </authorList>
    </citation>
    <scope>NUCLEOTIDE SEQUENCE [LARGE SCALE MRNA]</scope>
    <source>
        <tissue>Liver</tissue>
    </source>
</reference>
<dbReference type="EMBL" id="BC124527">
    <property type="protein sequence ID" value="AAI24528.1"/>
    <property type="molecule type" value="mRNA"/>
</dbReference>
<dbReference type="RefSeq" id="NP_001070190.1">
    <property type="nucleotide sequence ID" value="NM_001076722.1"/>
</dbReference>
<dbReference type="FunCoup" id="Q08BW6">
    <property type="interactions" value="839"/>
</dbReference>
<dbReference type="STRING" id="7955.ENSDARP00000094210"/>
<dbReference type="PaxDb" id="7955-ENSDARP00000094210"/>
<dbReference type="Ensembl" id="ENSDART00000103434">
    <property type="protein sequence ID" value="ENSDARP00000094210"/>
    <property type="gene ID" value="ENSDARG00000070461"/>
</dbReference>
<dbReference type="GeneID" id="767755"/>
<dbReference type="KEGG" id="dre:767755"/>
<dbReference type="AGR" id="ZFIN:ZDB-GENE-060929-922"/>
<dbReference type="CTD" id="84529"/>
<dbReference type="ZFIN" id="ZDB-GENE-060929-922">
    <property type="gene designation" value="cdin1"/>
</dbReference>
<dbReference type="eggNOG" id="ENOG502R9SY">
    <property type="taxonomic scope" value="Eukaryota"/>
</dbReference>
<dbReference type="InParanoid" id="Q08BW6"/>
<dbReference type="OMA" id="CYWNRFG"/>
<dbReference type="OrthoDB" id="1272at2759"/>
<dbReference type="PhylomeDB" id="Q08BW6"/>
<dbReference type="PRO" id="PR:Q08BW6"/>
<dbReference type="Proteomes" id="UP000000437">
    <property type="component" value="Chromosome 17"/>
</dbReference>
<dbReference type="Bgee" id="ENSDARG00000070461">
    <property type="expression patterns" value="Expressed in mature ovarian follicle and 24 other cell types or tissues"/>
</dbReference>
<dbReference type="ExpressionAtlas" id="Q08BW6">
    <property type="expression patterns" value="baseline"/>
</dbReference>
<dbReference type="GO" id="GO:0005737">
    <property type="term" value="C:cytoplasm"/>
    <property type="evidence" value="ECO:0000250"/>
    <property type="project" value="UniProtKB"/>
</dbReference>
<dbReference type="GO" id="GO:0005634">
    <property type="term" value="C:nucleus"/>
    <property type="evidence" value="ECO:0000250"/>
    <property type="project" value="UniProtKB"/>
</dbReference>
<dbReference type="GO" id="GO:0030218">
    <property type="term" value="P:erythrocyte differentiation"/>
    <property type="evidence" value="ECO:0000318"/>
    <property type="project" value="GO_Central"/>
</dbReference>
<dbReference type="InterPro" id="IPR029404">
    <property type="entry name" value="CDIN1"/>
</dbReference>
<dbReference type="PANTHER" id="PTHR31661:SF1">
    <property type="entry name" value="CDAN1-INTERACTING NUCLEASE 1"/>
    <property type="match status" value="1"/>
</dbReference>
<dbReference type="PANTHER" id="PTHR31661">
    <property type="entry name" value="SIMILAR TO CDNA SEQUENCE BC052040"/>
    <property type="match status" value="1"/>
</dbReference>
<dbReference type="Pfam" id="PF14811">
    <property type="entry name" value="TPD"/>
    <property type="match status" value="1"/>
</dbReference>
<comment type="function">
    <text evidence="1">May play a role in erythroid cell differentiation.</text>
</comment>
<comment type="subcellular location">
    <subcellularLocation>
        <location evidence="1">Nucleus</location>
    </subcellularLocation>
    <subcellularLocation>
        <location evidence="1">Cytoplasm</location>
    </subcellularLocation>
    <text evidence="1">Mainly nuclear.</text>
</comment>
<sequence>MDAVSGGSATGTGEQVNNLRICRAEYRSISRFVEQLRPTRQCMKTLQTHFTHLPASTLLSIFSQEYQKRMKRSMARHHSPEVLRVYYQRYRDEAETRATEPLLLELANQVDLSPALLARLMLECFLEERNASVPSRQVLNNMLREPYLIPDLVLAKHIEQCTVNDCCYGPLVDCIKHAIGLEHEDTLRDKLRERNLSFLDENQLRVKGYDKTPDIILEVPIAVDGHIVHWIESKASFGDDHSHNTYLNEQFWSYCNRFGPGLVIYWFGFISELDCQRERGILLKDGFPTDISSLCAGPQR</sequence>
<gene>
    <name type="primary">cdin1</name>
    <name type="ORF">zgc:154061</name>
</gene>
<feature type="chain" id="PRO_0000271047" description="CDAN1-interacting nuclease 1">
    <location>
        <begin position="1"/>
        <end position="300"/>
    </location>
</feature>
<protein>
    <recommendedName>
        <fullName>CDAN1-interacting nuclease 1</fullName>
    </recommendedName>
</protein>
<organism>
    <name type="scientific">Danio rerio</name>
    <name type="common">Zebrafish</name>
    <name type="synonym">Brachydanio rerio</name>
    <dbReference type="NCBI Taxonomy" id="7955"/>
    <lineage>
        <taxon>Eukaryota</taxon>
        <taxon>Metazoa</taxon>
        <taxon>Chordata</taxon>
        <taxon>Craniata</taxon>
        <taxon>Vertebrata</taxon>
        <taxon>Euteleostomi</taxon>
        <taxon>Actinopterygii</taxon>
        <taxon>Neopterygii</taxon>
        <taxon>Teleostei</taxon>
        <taxon>Ostariophysi</taxon>
        <taxon>Cypriniformes</taxon>
        <taxon>Danionidae</taxon>
        <taxon>Danioninae</taxon>
        <taxon>Danio</taxon>
    </lineage>
</organism>
<keyword id="KW-0963">Cytoplasm</keyword>
<keyword id="KW-0539">Nucleus</keyword>
<keyword id="KW-1185">Reference proteome</keyword>
<name>CDIN1_DANRE</name>
<evidence type="ECO:0000250" key="1">
    <source>
        <dbReference type="UniProtKB" id="Q9Y2V0"/>
    </source>
</evidence>
<proteinExistence type="evidence at transcript level"/>